<dbReference type="EC" id="6.1.1.17" evidence="1"/>
<dbReference type="EMBL" id="BA000037">
    <property type="protein sequence ID" value="BAC93713.1"/>
    <property type="molecule type" value="Genomic_DNA"/>
</dbReference>
<dbReference type="RefSeq" id="WP_011149741.1">
    <property type="nucleotide sequence ID" value="NC_005139.1"/>
</dbReference>
<dbReference type="SMR" id="Q7MMW8"/>
<dbReference type="STRING" id="672.VV93_v1c08780"/>
<dbReference type="KEGG" id="vvy:VV0949"/>
<dbReference type="PATRIC" id="fig|196600.6.peg.948"/>
<dbReference type="eggNOG" id="COG0008">
    <property type="taxonomic scope" value="Bacteria"/>
</dbReference>
<dbReference type="HOGENOM" id="CLU_015768_6_3_6"/>
<dbReference type="Proteomes" id="UP000002675">
    <property type="component" value="Chromosome I"/>
</dbReference>
<dbReference type="GO" id="GO:0005829">
    <property type="term" value="C:cytosol"/>
    <property type="evidence" value="ECO:0007669"/>
    <property type="project" value="TreeGrafter"/>
</dbReference>
<dbReference type="GO" id="GO:0005524">
    <property type="term" value="F:ATP binding"/>
    <property type="evidence" value="ECO:0007669"/>
    <property type="project" value="UniProtKB-UniRule"/>
</dbReference>
<dbReference type="GO" id="GO:0004818">
    <property type="term" value="F:glutamate-tRNA ligase activity"/>
    <property type="evidence" value="ECO:0007669"/>
    <property type="project" value="UniProtKB-UniRule"/>
</dbReference>
<dbReference type="GO" id="GO:0000049">
    <property type="term" value="F:tRNA binding"/>
    <property type="evidence" value="ECO:0007669"/>
    <property type="project" value="InterPro"/>
</dbReference>
<dbReference type="GO" id="GO:0008270">
    <property type="term" value="F:zinc ion binding"/>
    <property type="evidence" value="ECO:0007669"/>
    <property type="project" value="InterPro"/>
</dbReference>
<dbReference type="GO" id="GO:0006424">
    <property type="term" value="P:glutamyl-tRNA aminoacylation"/>
    <property type="evidence" value="ECO:0007669"/>
    <property type="project" value="UniProtKB-UniRule"/>
</dbReference>
<dbReference type="CDD" id="cd00808">
    <property type="entry name" value="GluRS_core"/>
    <property type="match status" value="1"/>
</dbReference>
<dbReference type="FunFam" id="1.10.10.350:FF:000001">
    <property type="entry name" value="Glutamate--tRNA ligase"/>
    <property type="match status" value="1"/>
</dbReference>
<dbReference type="FunFam" id="3.40.50.620:FF:000007">
    <property type="entry name" value="Glutamate--tRNA ligase"/>
    <property type="match status" value="1"/>
</dbReference>
<dbReference type="Gene3D" id="1.10.10.350">
    <property type="match status" value="1"/>
</dbReference>
<dbReference type="Gene3D" id="3.40.50.620">
    <property type="entry name" value="HUPs"/>
    <property type="match status" value="1"/>
</dbReference>
<dbReference type="HAMAP" id="MF_00022">
    <property type="entry name" value="Glu_tRNA_synth_type1"/>
    <property type="match status" value="1"/>
</dbReference>
<dbReference type="InterPro" id="IPR045462">
    <property type="entry name" value="aa-tRNA-synth_I_cd-bd"/>
</dbReference>
<dbReference type="InterPro" id="IPR020751">
    <property type="entry name" value="aa-tRNA-synth_I_codon-bd_sub2"/>
</dbReference>
<dbReference type="InterPro" id="IPR001412">
    <property type="entry name" value="aa-tRNA-synth_I_CS"/>
</dbReference>
<dbReference type="InterPro" id="IPR008925">
    <property type="entry name" value="aa_tRNA-synth_I_cd-bd_sf"/>
</dbReference>
<dbReference type="InterPro" id="IPR004527">
    <property type="entry name" value="Glu-tRNA-ligase_bac/mito"/>
</dbReference>
<dbReference type="InterPro" id="IPR000924">
    <property type="entry name" value="Glu/Gln-tRNA-synth"/>
</dbReference>
<dbReference type="InterPro" id="IPR020058">
    <property type="entry name" value="Glu/Gln-tRNA-synth_Ib_cat-dom"/>
</dbReference>
<dbReference type="InterPro" id="IPR049940">
    <property type="entry name" value="GluQ/Sye"/>
</dbReference>
<dbReference type="InterPro" id="IPR033910">
    <property type="entry name" value="GluRS_core"/>
</dbReference>
<dbReference type="InterPro" id="IPR014729">
    <property type="entry name" value="Rossmann-like_a/b/a_fold"/>
</dbReference>
<dbReference type="NCBIfam" id="TIGR00464">
    <property type="entry name" value="gltX_bact"/>
    <property type="match status" value="1"/>
</dbReference>
<dbReference type="PANTHER" id="PTHR43311">
    <property type="entry name" value="GLUTAMATE--TRNA LIGASE"/>
    <property type="match status" value="1"/>
</dbReference>
<dbReference type="PANTHER" id="PTHR43311:SF2">
    <property type="entry name" value="GLUTAMATE--TRNA LIGASE, MITOCHONDRIAL-RELATED"/>
    <property type="match status" value="1"/>
</dbReference>
<dbReference type="Pfam" id="PF19269">
    <property type="entry name" value="Anticodon_2"/>
    <property type="match status" value="1"/>
</dbReference>
<dbReference type="Pfam" id="PF00749">
    <property type="entry name" value="tRNA-synt_1c"/>
    <property type="match status" value="1"/>
</dbReference>
<dbReference type="PRINTS" id="PR00987">
    <property type="entry name" value="TRNASYNTHGLU"/>
</dbReference>
<dbReference type="SUPFAM" id="SSF48163">
    <property type="entry name" value="An anticodon-binding domain of class I aminoacyl-tRNA synthetases"/>
    <property type="match status" value="1"/>
</dbReference>
<dbReference type="SUPFAM" id="SSF52374">
    <property type="entry name" value="Nucleotidylyl transferase"/>
    <property type="match status" value="1"/>
</dbReference>
<dbReference type="PROSITE" id="PS00178">
    <property type="entry name" value="AA_TRNA_LIGASE_I"/>
    <property type="match status" value="1"/>
</dbReference>
<reference key="1">
    <citation type="journal article" date="2003" name="Genome Res.">
        <title>Comparative genome analysis of Vibrio vulnificus, a marine pathogen.</title>
        <authorList>
            <person name="Chen C.-Y."/>
            <person name="Wu K.-M."/>
            <person name="Chang Y.-C."/>
            <person name="Chang C.-H."/>
            <person name="Tsai H.-C."/>
            <person name="Liao T.-L."/>
            <person name="Liu Y.-M."/>
            <person name="Chen H.-J."/>
            <person name="Shen A.B.-T."/>
            <person name="Li J.-C."/>
            <person name="Su T.-L."/>
            <person name="Shao C.-P."/>
            <person name="Lee C.-T."/>
            <person name="Hor L.-I."/>
            <person name="Tsai S.-F."/>
        </authorList>
    </citation>
    <scope>NUCLEOTIDE SEQUENCE [LARGE SCALE GENOMIC DNA]</scope>
    <source>
        <strain>YJ016</strain>
    </source>
</reference>
<organism>
    <name type="scientific">Vibrio vulnificus (strain YJ016)</name>
    <dbReference type="NCBI Taxonomy" id="196600"/>
    <lineage>
        <taxon>Bacteria</taxon>
        <taxon>Pseudomonadati</taxon>
        <taxon>Pseudomonadota</taxon>
        <taxon>Gammaproteobacteria</taxon>
        <taxon>Vibrionales</taxon>
        <taxon>Vibrionaceae</taxon>
        <taxon>Vibrio</taxon>
    </lineage>
</organism>
<feature type="chain" id="PRO_0000119695" description="Glutamate--tRNA ligase">
    <location>
        <begin position="1"/>
        <end position="474"/>
    </location>
</feature>
<feature type="short sequence motif" description="'HIGH' region" evidence="1">
    <location>
        <begin position="9"/>
        <end position="19"/>
    </location>
</feature>
<feature type="short sequence motif" description="'KMSKS' region" evidence="1">
    <location>
        <begin position="240"/>
        <end position="244"/>
    </location>
</feature>
<feature type="binding site" evidence="1">
    <location>
        <position position="243"/>
    </location>
    <ligand>
        <name>ATP</name>
        <dbReference type="ChEBI" id="CHEBI:30616"/>
    </ligand>
</feature>
<protein>
    <recommendedName>
        <fullName evidence="1">Glutamate--tRNA ligase</fullName>
        <ecNumber evidence="1">6.1.1.17</ecNumber>
    </recommendedName>
    <alternativeName>
        <fullName evidence="1">Glutamyl-tRNA synthetase</fullName>
        <shortName evidence="1">GluRS</shortName>
    </alternativeName>
</protein>
<sequence length="474" mass="53282">MTVKTRFAPSPTGYLHVGGARTALYSWLYAKSQGGEFVLRIEDTDLERNSQEAVDAILEGMQWLGLEWNEGPYFQTQRFDRYNEMVDKLLAEDKAYKCYASKELLDEVRAEQEANKEMPRYDAEHPKIKAANEAAKDGDPCVIRFRNPKEGSVVFEDQIRGRIEISNSQMDDLIIRRTDGSPTYNFCVVVDDWDMGITHVIRGEDHINNTPRQINIYEALGAPVPTFAHCAMILGDDGAKLSKRHGAVSVMQYRDMGYLPVALNNYLVRLGWSHGDQEIFSQEEMINLFSLNAISKSASAFNTDKLLWLNNHYIKTSDPKYVAEHLQWHLDQKDIKTENGPAITDVIKLVGERCNTLVELADQIGYFYQDFDAFDADAAKKHLRGVAKQPLEVALAKVEALTEWTTENLHQVIADVCTDLEIGMGKIGMPLRVAVTGGGQSPSVDAVMQLIGKERVVARIKMALAFIAEREANA</sequence>
<evidence type="ECO:0000255" key="1">
    <source>
        <dbReference type="HAMAP-Rule" id="MF_00022"/>
    </source>
</evidence>
<keyword id="KW-0030">Aminoacyl-tRNA synthetase</keyword>
<keyword id="KW-0067">ATP-binding</keyword>
<keyword id="KW-0963">Cytoplasm</keyword>
<keyword id="KW-0436">Ligase</keyword>
<keyword id="KW-0547">Nucleotide-binding</keyword>
<keyword id="KW-0648">Protein biosynthesis</keyword>
<name>SYE_VIBVY</name>
<proteinExistence type="inferred from homology"/>
<accession>Q7MMW8</accession>
<comment type="function">
    <text evidence="1">Catalyzes the attachment of glutamate to tRNA(Glu) in a two-step reaction: glutamate is first activated by ATP to form Glu-AMP and then transferred to the acceptor end of tRNA(Glu).</text>
</comment>
<comment type="catalytic activity">
    <reaction evidence="1">
        <text>tRNA(Glu) + L-glutamate + ATP = L-glutamyl-tRNA(Glu) + AMP + diphosphate</text>
        <dbReference type="Rhea" id="RHEA:23540"/>
        <dbReference type="Rhea" id="RHEA-COMP:9663"/>
        <dbReference type="Rhea" id="RHEA-COMP:9680"/>
        <dbReference type="ChEBI" id="CHEBI:29985"/>
        <dbReference type="ChEBI" id="CHEBI:30616"/>
        <dbReference type="ChEBI" id="CHEBI:33019"/>
        <dbReference type="ChEBI" id="CHEBI:78442"/>
        <dbReference type="ChEBI" id="CHEBI:78520"/>
        <dbReference type="ChEBI" id="CHEBI:456215"/>
        <dbReference type="EC" id="6.1.1.17"/>
    </reaction>
</comment>
<comment type="subunit">
    <text evidence="1">Monomer.</text>
</comment>
<comment type="subcellular location">
    <subcellularLocation>
        <location evidence="1">Cytoplasm</location>
    </subcellularLocation>
</comment>
<comment type="similarity">
    <text evidence="1">Belongs to the class-I aminoacyl-tRNA synthetase family. Glutamate--tRNA ligase type 1 subfamily.</text>
</comment>
<gene>
    <name evidence="1" type="primary">gltX</name>
    <name type="ordered locus">VV0949</name>
</gene>